<proteinExistence type="inferred from homology"/>
<reference key="1">
    <citation type="submission" date="2008-02" db="EMBL/GenBank/DDBJ databases">
        <title>Complete sequence of Yersinia pseudotuberculosis YPIII.</title>
        <authorList>
            <consortium name="US DOE Joint Genome Institute"/>
            <person name="Copeland A."/>
            <person name="Lucas S."/>
            <person name="Lapidus A."/>
            <person name="Glavina del Rio T."/>
            <person name="Dalin E."/>
            <person name="Tice H."/>
            <person name="Bruce D."/>
            <person name="Goodwin L."/>
            <person name="Pitluck S."/>
            <person name="Munk A.C."/>
            <person name="Brettin T."/>
            <person name="Detter J.C."/>
            <person name="Han C."/>
            <person name="Tapia R."/>
            <person name="Schmutz J."/>
            <person name="Larimer F."/>
            <person name="Land M."/>
            <person name="Hauser L."/>
            <person name="Challacombe J.F."/>
            <person name="Green L."/>
            <person name="Lindler L.E."/>
            <person name="Nikolich M.P."/>
            <person name="Richardson P."/>
        </authorList>
    </citation>
    <scope>NUCLEOTIDE SEQUENCE [LARGE SCALE GENOMIC DNA]</scope>
    <source>
        <strain>YPIII</strain>
    </source>
</reference>
<gene>
    <name evidence="1" type="primary">secB</name>
    <name type="ordered locus">YPK_4138</name>
</gene>
<feature type="chain" id="PRO_1000134421" description="Protein-export protein SecB">
    <location>
        <begin position="1"/>
        <end position="158"/>
    </location>
</feature>
<sequence>MSEQNNTEMAFQIQRIYTKDISFEAPNAPQVFQQDWQPEVKLDLDTASSQLAEDVYEVVLRVTVTASLGEETAFLCEVQQGGIFSVAGIEGTQLAHCLGAYCPNILFPYARECITSLVSRGTFPQLNLAPVNFDALFMNYLQQQAEGEVEGVEQRQDA</sequence>
<keyword id="KW-0143">Chaperone</keyword>
<keyword id="KW-0963">Cytoplasm</keyword>
<keyword id="KW-0653">Protein transport</keyword>
<keyword id="KW-0811">Translocation</keyword>
<keyword id="KW-0813">Transport</keyword>
<evidence type="ECO:0000255" key="1">
    <source>
        <dbReference type="HAMAP-Rule" id="MF_00821"/>
    </source>
</evidence>
<accession>B1JQV6</accession>
<name>SECB_YERPY</name>
<dbReference type="EMBL" id="CP000950">
    <property type="protein sequence ID" value="ACA70397.1"/>
    <property type="molecule type" value="Genomic_DNA"/>
</dbReference>
<dbReference type="RefSeq" id="WP_002208976.1">
    <property type="nucleotide sequence ID" value="NZ_CP009792.1"/>
</dbReference>
<dbReference type="SMR" id="B1JQV6"/>
<dbReference type="GeneID" id="96663547"/>
<dbReference type="KEGG" id="ypy:YPK_4138"/>
<dbReference type="PATRIC" id="fig|502800.11.peg.489"/>
<dbReference type="GO" id="GO:0005737">
    <property type="term" value="C:cytoplasm"/>
    <property type="evidence" value="ECO:0007669"/>
    <property type="project" value="UniProtKB-SubCell"/>
</dbReference>
<dbReference type="GO" id="GO:0051082">
    <property type="term" value="F:unfolded protein binding"/>
    <property type="evidence" value="ECO:0007669"/>
    <property type="project" value="InterPro"/>
</dbReference>
<dbReference type="GO" id="GO:0006457">
    <property type="term" value="P:protein folding"/>
    <property type="evidence" value="ECO:0007669"/>
    <property type="project" value="UniProtKB-UniRule"/>
</dbReference>
<dbReference type="GO" id="GO:0051262">
    <property type="term" value="P:protein tetramerization"/>
    <property type="evidence" value="ECO:0007669"/>
    <property type="project" value="InterPro"/>
</dbReference>
<dbReference type="GO" id="GO:0015031">
    <property type="term" value="P:protein transport"/>
    <property type="evidence" value="ECO:0007669"/>
    <property type="project" value="UniProtKB-UniRule"/>
</dbReference>
<dbReference type="CDD" id="cd00557">
    <property type="entry name" value="Translocase_SecB"/>
    <property type="match status" value="1"/>
</dbReference>
<dbReference type="FunFam" id="3.10.420.10:FF:000001">
    <property type="entry name" value="Protein-export chaperone SecB"/>
    <property type="match status" value="1"/>
</dbReference>
<dbReference type="Gene3D" id="3.10.420.10">
    <property type="entry name" value="SecB-like"/>
    <property type="match status" value="1"/>
</dbReference>
<dbReference type="HAMAP" id="MF_00821">
    <property type="entry name" value="SecB"/>
    <property type="match status" value="1"/>
</dbReference>
<dbReference type="InterPro" id="IPR003708">
    <property type="entry name" value="SecB"/>
</dbReference>
<dbReference type="InterPro" id="IPR035958">
    <property type="entry name" value="SecB-like_sf"/>
</dbReference>
<dbReference type="NCBIfam" id="NF004390">
    <property type="entry name" value="PRK05751.1-1"/>
    <property type="match status" value="1"/>
</dbReference>
<dbReference type="NCBIfam" id="NF004393">
    <property type="entry name" value="PRK05751.1-4"/>
    <property type="match status" value="1"/>
</dbReference>
<dbReference type="NCBIfam" id="TIGR00809">
    <property type="entry name" value="secB"/>
    <property type="match status" value="1"/>
</dbReference>
<dbReference type="PANTHER" id="PTHR36918">
    <property type="match status" value="1"/>
</dbReference>
<dbReference type="PANTHER" id="PTHR36918:SF1">
    <property type="entry name" value="PROTEIN-EXPORT PROTEIN SECB"/>
    <property type="match status" value="1"/>
</dbReference>
<dbReference type="Pfam" id="PF02556">
    <property type="entry name" value="SecB"/>
    <property type="match status" value="1"/>
</dbReference>
<dbReference type="PRINTS" id="PR01594">
    <property type="entry name" value="SECBCHAPRONE"/>
</dbReference>
<dbReference type="SUPFAM" id="SSF54611">
    <property type="entry name" value="SecB-like"/>
    <property type="match status" value="1"/>
</dbReference>
<organism>
    <name type="scientific">Yersinia pseudotuberculosis serotype O:3 (strain YPIII)</name>
    <dbReference type="NCBI Taxonomy" id="502800"/>
    <lineage>
        <taxon>Bacteria</taxon>
        <taxon>Pseudomonadati</taxon>
        <taxon>Pseudomonadota</taxon>
        <taxon>Gammaproteobacteria</taxon>
        <taxon>Enterobacterales</taxon>
        <taxon>Yersiniaceae</taxon>
        <taxon>Yersinia</taxon>
    </lineage>
</organism>
<comment type="function">
    <text evidence="1">One of the proteins required for the normal export of preproteins out of the cell cytoplasm. It is a molecular chaperone that binds to a subset of precursor proteins, maintaining them in a translocation-competent state. It also specifically binds to its receptor SecA.</text>
</comment>
<comment type="subunit">
    <text evidence="1">Homotetramer, a dimer of dimers. One homotetramer interacts with 1 SecA dimer.</text>
</comment>
<comment type="subcellular location">
    <subcellularLocation>
        <location evidence="1">Cytoplasm</location>
    </subcellularLocation>
</comment>
<comment type="similarity">
    <text evidence="1">Belongs to the SecB family.</text>
</comment>
<protein>
    <recommendedName>
        <fullName evidence="1">Protein-export protein SecB</fullName>
    </recommendedName>
</protein>